<protein>
    <recommendedName>
        <fullName>Oxidation resistance protein 1</fullName>
    </recommendedName>
</protein>
<accession>Q755A3</accession>
<gene>
    <name type="primary">OXR1</name>
    <name type="ordered locus">AFL078W</name>
</gene>
<sequence length="237" mass="26688">MDGWRSRFKRLHRTLSVGEEQCTPAIKLNSPDATLQTEACAPEDEGGLPPVQLCGYLSSTRDRLLTAELCAELRPLMPSRIQLYTKWCLLYSLEQHGASLHSLYEHVRPEEPAKARVGYLLIMRDRRGGLFGAYANEPFRPTESRRYSGNGECFLWSADLHPMLRLRAYPYTGLNEFCIYCTSGFLSMGAGSGHYGLWCDEGLVHGVSERSPTFGNDALSREGPRFHIVALEVWRVG</sequence>
<reference key="1">
    <citation type="journal article" date="2004" name="Science">
        <title>The Ashbya gossypii genome as a tool for mapping the ancient Saccharomyces cerevisiae genome.</title>
        <authorList>
            <person name="Dietrich F.S."/>
            <person name="Voegeli S."/>
            <person name="Brachat S."/>
            <person name="Lerch A."/>
            <person name="Gates K."/>
            <person name="Steiner S."/>
            <person name="Mohr C."/>
            <person name="Poehlmann R."/>
            <person name="Luedi P."/>
            <person name="Choi S."/>
            <person name="Wing R.A."/>
            <person name="Flavier A."/>
            <person name="Gaffney T.D."/>
            <person name="Philippsen P."/>
        </authorList>
    </citation>
    <scope>NUCLEOTIDE SEQUENCE [LARGE SCALE GENOMIC DNA]</scope>
    <source>
        <strain>ATCC 10895 / CBS 109.51 / FGSC 9923 / NRRL Y-1056</strain>
    </source>
</reference>
<reference key="2">
    <citation type="journal article" date="2013" name="G3 (Bethesda)">
        <title>Genomes of Ashbya fungi isolated from insects reveal four mating-type loci, numerous translocations, lack of transposons, and distinct gene duplications.</title>
        <authorList>
            <person name="Dietrich F.S."/>
            <person name="Voegeli S."/>
            <person name="Kuo S."/>
            <person name="Philippsen P."/>
        </authorList>
    </citation>
    <scope>GENOME REANNOTATION</scope>
    <scope>SEQUENCE REVISION TO 154 AND 157</scope>
    <source>
        <strain>ATCC 10895 / CBS 109.51 / FGSC 9923 / NRRL Y-1056</strain>
    </source>
</reference>
<feature type="chain" id="PRO_0000058109" description="Oxidation resistance protein 1">
    <location>
        <begin position="1"/>
        <end position="237"/>
    </location>
</feature>
<feature type="domain" description="TLDc" evidence="2">
    <location>
        <begin position="63"/>
        <end position="237"/>
    </location>
</feature>
<comment type="function">
    <text evidence="1">May be involved in protection from oxidative damage.</text>
</comment>
<comment type="subcellular location">
    <subcellularLocation>
        <location evidence="1">Mitochondrion</location>
    </subcellularLocation>
</comment>
<comment type="similarity">
    <text evidence="3">Belongs to the OXR1 family.</text>
</comment>
<evidence type="ECO:0000250" key="1"/>
<evidence type="ECO:0000255" key="2">
    <source>
        <dbReference type="PROSITE-ProRule" id="PRU01234"/>
    </source>
</evidence>
<evidence type="ECO:0000305" key="3"/>
<keyword id="KW-0496">Mitochondrion</keyword>
<keyword id="KW-1185">Reference proteome</keyword>
<proteinExistence type="inferred from homology"/>
<organism>
    <name type="scientific">Eremothecium gossypii (strain ATCC 10895 / CBS 109.51 / FGSC 9923 / NRRL Y-1056)</name>
    <name type="common">Yeast</name>
    <name type="synonym">Ashbya gossypii</name>
    <dbReference type="NCBI Taxonomy" id="284811"/>
    <lineage>
        <taxon>Eukaryota</taxon>
        <taxon>Fungi</taxon>
        <taxon>Dikarya</taxon>
        <taxon>Ascomycota</taxon>
        <taxon>Saccharomycotina</taxon>
        <taxon>Saccharomycetes</taxon>
        <taxon>Saccharomycetales</taxon>
        <taxon>Saccharomycetaceae</taxon>
        <taxon>Eremothecium</taxon>
    </lineage>
</organism>
<name>OXR1_EREGS</name>
<dbReference type="EMBL" id="AE016819">
    <property type="protein sequence ID" value="AAS53294.2"/>
    <property type="molecule type" value="Genomic_DNA"/>
</dbReference>
<dbReference type="RefSeq" id="NP_985470.2">
    <property type="nucleotide sequence ID" value="NM_210824.2"/>
</dbReference>
<dbReference type="SMR" id="Q755A3"/>
<dbReference type="FunCoup" id="Q755A3">
    <property type="interactions" value="24"/>
</dbReference>
<dbReference type="STRING" id="284811.Q755A3"/>
<dbReference type="EnsemblFungi" id="AAS53294">
    <property type="protein sequence ID" value="AAS53294"/>
    <property type="gene ID" value="AGOS_AFL078W"/>
</dbReference>
<dbReference type="GeneID" id="4621699"/>
<dbReference type="KEGG" id="ago:AGOS_AFL078W"/>
<dbReference type="eggNOG" id="KOG2372">
    <property type="taxonomic scope" value="Eukaryota"/>
</dbReference>
<dbReference type="HOGENOM" id="CLU_029204_0_0_1"/>
<dbReference type="InParanoid" id="Q755A3"/>
<dbReference type="OMA" id="HYGLWCD"/>
<dbReference type="OrthoDB" id="26679at2759"/>
<dbReference type="Proteomes" id="UP000000591">
    <property type="component" value="Chromosome VI"/>
</dbReference>
<dbReference type="GO" id="GO:0005739">
    <property type="term" value="C:mitochondrion"/>
    <property type="evidence" value="ECO:0007669"/>
    <property type="project" value="UniProtKB-SubCell"/>
</dbReference>
<dbReference type="GO" id="GO:0005634">
    <property type="term" value="C:nucleus"/>
    <property type="evidence" value="ECO:0000318"/>
    <property type="project" value="GO_Central"/>
</dbReference>
<dbReference type="GO" id="GO:0045053">
    <property type="term" value="P:protein retention in Golgi apparatus"/>
    <property type="evidence" value="ECO:0007669"/>
    <property type="project" value="EnsemblFungi"/>
</dbReference>
<dbReference type="GO" id="GO:0032984">
    <property type="term" value="P:protein-containing complex disassembly"/>
    <property type="evidence" value="ECO:0007669"/>
    <property type="project" value="EnsemblFungi"/>
</dbReference>
<dbReference type="GO" id="GO:0006979">
    <property type="term" value="P:response to oxidative stress"/>
    <property type="evidence" value="ECO:0000318"/>
    <property type="project" value="GO_Central"/>
</dbReference>
<dbReference type="InterPro" id="IPR006571">
    <property type="entry name" value="TLDc_dom"/>
</dbReference>
<dbReference type="PANTHER" id="PTHR23354:SF62">
    <property type="entry name" value="MUSTARD, ISOFORM V"/>
    <property type="match status" value="1"/>
</dbReference>
<dbReference type="PANTHER" id="PTHR23354">
    <property type="entry name" value="NUCLEOLAR PROTEIN 7/ESTROGEN RECEPTOR COACTIVATOR-RELATED"/>
    <property type="match status" value="1"/>
</dbReference>
<dbReference type="Pfam" id="PF07534">
    <property type="entry name" value="TLD"/>
    <property type="match status" value="1"/>
</dbReference>
<dbReference type="SMART" id="SM00584">
    <property type="entry name" value="TLDc"/>
    <property type="match status" value="1"/>
</dbReference>
<dbReference type="PROSITE" id="PS51886">
    <property type="entry name" value="TLDC"/>
    <property type="match status" value="1"/>
</dbReference>